<proteinExistence type="inferred from homology"/>
<keyword id="KW-0251">Elongation factor</keyword>
<keyword id="KW-0496">Mitochondrion</keyword>
<keyword id="KW-0648">Protein biosynthesis</keyword>
<keyword id="KW-1185">Reference proteome</keyword>
<accession>Q4DW94</accession>
<comment type="function">
    <text evidence="1">Associates with the EF-Tu.GDP complex and induces the exchange of GDP to GTP. It remains bound to the aminoacyl-tRNA.EF-Tu.GTP complex up to the GTP hydrolysis stage on the ribosome.</text>
</comment>
<comment type="subcellular location">
    <subcellularLocation>
        <location evidence="1">Mitochondrion</location>
    </subcellularLocation>
</comment>
<comment type="miscellaneous">
    <text evidence="1">This protein may be expected to contain an N-terminal transit peptide but none has been predicted.</text>
</comment>
<comment type="similarity">
    <text evidence="1">Belongs to the EF-Ts family.</text>
</comment>
<dbReference type="EMBL" id="AAHK01000131">
    <property type="protein sequence ID" value="EAN96796.1"/>
    <property type="molecule type" value="Genomic_DNA"/>
</dbReference>
<dbReference type="RefSeq" id="XP_818647.1">
    <property type="nucleotide sequence ID" value="XM_813554.1"/>
</dbReference>
<dbReference type="SMR" id="Q4DW94"/>
<dbReference type="STRING" id="353153.Q4DW94"/>
<dbReference type="PaxDb" id="353153-Q4DW94"/>
<dbReference type="EnsemblProtists" id="EAN96796">
    <property type="protein sequence ID" value="EAN96796"/>
    <property type="gene ID" value="Tc00.1047053506989.140"/>
</dbReference>
<dbReference type="GeneID" id="3550936"/>
<dbReference type="KEGG" id="tcr:506989.140"/>
<dbReference type="eggNOG" id="KOG1071">
    <property type="taxonomic scope" value="Eukaryota"/>
</dbReference>
<dbReference type="InParanoid" id="Q4DW94"/>
<dbReference type="OMA" id="APHMSER"/>
<dbReference type="Proteomes" id="UP000002296">
    <property type="component" value="Unassembled WGS sequence"/>
</dbReference>
<dbReference type="GO" id="GO:0005739">
    <property type="term" value="C:mitochondrion"/>
    <property type="evidence" value="ECO:0007669"/>
    <property type="project" value="UniProtKB-SubCell"/>
</dbReference>
<dbReference type="GO" id="GO:0003746">
    <property type="term" value="F:translation elongation factor activity"/>
    <property type="evidence" value="ECO:0007669"/>
    <property type="project" value="UniProtKB-UniRule"/>
</dbReference>
<dbReference type="GO" id="GO:0070125">
    <property type="term" value="P:mitochondrial translational elongation"/>
    <property type="evidence" value="ECO:0007669"/>
    <property type="project" value="TreeGrafter"/>
</dbReference>
<dbReference type="FunFam" id="1.10.8.10:FF:000001">
    <property type="entry name" value="Elongation factor Ts"/>
    <property type="match status" value="1"/>
</dbReference>
<dbReference type="Gene3D" id="1.10.8.10">
    <property type="entry name" value="DNA helicase RuvA subunit, C-terminal domain"/>
    <property type="match status" value="1"/>
</dbReference>
<dbReference type="Gene3D" id="3.30.479.20">
    <property type="entry name" value="Elongation factor Ts, dimerisation domain"/>
    <property type="match status" value="1"/>
</dbReference>
<dbReference type="HAMAP" id="MF_00050">
    <property type="entry name" value="EF_Ts"/>
    <property type="match status" value="1"/>
</dbReference>
<dbReference type="InterPro" id="IPR036402">
    <property type="entry name" value="EF-Ts_dimer_sf"/>
</dbReference>
<dbReference type="InterPro" id="IPR001816">
    <property type="entry name" value="Transl_elong_EFTs/EF1B"/>
</dbReference>
<dbReference type="InterPro" id="IPR014039">
    <property type="entry name" value="Transl_elong_EFTs/EF1B_dimer"/>
</dbReference>
<dbReference type="InterPro" id="IPR009060">
    <property type="entry name" value="UBA-like_sf"/>
</dbReference>
<dbReference type="PANTHER" id="PTHR11741">
    <property type="entry name" value="ELONGATION FACTOR TS"/>
    <property type="match status" value="1"/>
</dbReference>
<dbReference type="PANTHER" id="PTHR11741:SF0">
    <property type="entry name" value="ELONGATION FACTOR TS, MITOCHONDRIAL"/>
    <property type="match status" value="1"/>
</dbReference>
<dbReference type="Pfam" id="PF00889">
    <property type="entry name" value="EF_TS"/>
    <property type="match status" value="1"/>
</dbReference>
<dbReference type="SUPFAM" id="SSF54713">
    <property type="entry name" value="Elongation factor Ts (EF-Ts), dimerisation domain"/>
    <property type="match status" value="1"/>
</dbReference>
<dbReference type="SUPFAM" id="SSF46934">
    <property type="entry name" value="UBA-like"/>
    <property type="match status" value="1"/>
</dbReference>
<name>EFTS2_TRYCC</name>
<organism>
    <name type="scientific">Trypanosoma cruzi (strain CL Brener)</name>
    <dbReference type="NCBI Taxonomy" id="353153"/>
    <lineage>
        <taxon>Eukaryota</taxon>
        <taxon>Discoba</taxon>
        <taxon>Euglenozoa</taxon>
        <taxon>Kinetoplastea</taxon>
        <taxon>Metakinetoplastina</taxon>
        <taxon>Trypanosomatida</taxon>
        <taxon>Trypanosomatidae</taxon>
        <taxon>Trypanosoma</taxon>
        <taxon>Schizotrypanum</taxon>
    </lineage>
</organism>
<gene>
    <name type="ORF">Tc00.1047053506989.140</name>
</gene>
<reference key="1">
    <citation type="journal article" date="2005" name="Science">
        <title>The genome sequence of Trypanosoma cruzi, etiologic agent of Chagas disease.</title>
        <authorList>
            <person name="El-Sayed N.M.A."/>
            <person name="Myler P.J."/>
            <person name="Bartholomeu D.C."/>
            <person name="Nilsson D."/>
            <person name="Aggarwal G."/>
            <person name="Tran A.-N."/>
            <person name="Ghedin E."/>
            <person name="Worthey E.A."/>
            <person name="Delcher A.L."/>
            <person name="Blandin G."/>
            <person name="Westenberger S.J."/>
            <person name="Caler E."/>
            <person name="Cerqueira G.C."/>
            <person name="Branche C."/>
            <person name="Haas B."/>
            <person name="Anupama A."/>
            <person name="Arner E."/>
            <person name="Aslund L."/>
            <person name="Attipoe P."/>
            <person name="Bontempi E."/>
            <person name="Bringaud F."/>
            <person name="Burton P."/>
            <person name="Cadag E."/>
            <person name="Campbell D.A."/>
            <person name="Carrington M."/>
            <person name="Crabtree J."/>
            <person name="Darban H."/>
            <person name="da Silveira J.F."/>
            <person name="de Jong P."/>
            <person name="Edwards K."/>
            <person name="Englund P.T."/>
            <person name="Fazelina G."/>
            <person name="Feldblyum T."/>
            <person name="Ferella M."/>
            <person name="Frasch A.C."/>
            <person name="Gull K."/>
            <person name="Horn D."/>
            <person name="Hou L."/>
            <person name="Huang Y."/>
            <person name="Kindlund E."/>
            <person name="Klingbeil M."/>
            <person name="Kluge S."/>
            <person name="Koo H."/>
            <person name="Lacerda D."/>
            <person name="Levin M.J."/>
            <person name="Lorenzi H."/>
            <person name="Louie T."/>
            <person name="Machado C.R."/>
            <person name="McCulloch R."/>
            <person name="McKenna A."/>
            <person name="Mizuno Y."/>
            <person name="Mottram J.C."/>
            <person name="Nelson S."/>
            <person name="Ochaya S."/>
            <person name="Osoegawa K."/>
            <person name="Pai G."/>
            <person name="Parsons M."/>
            <person name="Pentony M."/>
            <person name="Pettersson U."/>
            <person name="Pop M."/>
            <person name="Ramirez J.L."/>
            <person name="Rinta J."/>
            <person name="Robertson L."/>
            <person name="Salzberg S.L."/>
            <person name="Sanchez D.O."/>
            <person name="Seyler A."/>
            <person name="Sharma R."/>
            <person name="Shetty J."/>
            <person name="Simpson A.J."/>
            <person name="Sisk E."/>
            <person name="Tammi M.T."/>
            <person name="Tarleton R."/>
            <person name="Teixeira S."/>
            <person name="Van Aken S."/>
            <person name="Vogt C."/>
            <person name="Ward P.N."/>
            <person name="Wickstead B."/>
            <person name="Wortman J."/>
            <person name="White O."/>
            <person name="Fraser C.M."/>
            <person name="Stuart K.D."/>
            <person name="Andersson B."/>
        </authorList>
    </citation>
    <scope>NUCLEOTIDE SEQUENCE [LARGE SCALE GENOMIC DNA]</scope>
    <source>
        <strain>CL Brener</strain>
    </source>
</reference>
<protein>
    <recommendedName>
        <fullName>Elongation factor Ts 2, mitochondrial</fullName>
        <shortName evidence="1">EF-Ts 2</shortName>
        <shortName evidence="1">EF-TsMt 2</shortName>
    </recommendedName>
</protein>
<feature type="chain" id="PRO_0000402340" description="Elongation factor Ts 2, mitochondrial">
    <location>
        <begin position="1"/>
        <end position="278"/>
    </location>
</feature>
<evidence type="ECO:0000255" key="1">
    <source>
        <dbReference type="HAMAP-Rule" id="MF_03135"/>
    </source>
</evidence>
<sequence length="278" mass="29998">MLCLTRLRANVNKVAFMEMVKDLRFRTEAPIAECGAALKETHGDVEKAMEVLRKKGAARAMKKRSRVTEHGSVVACVGGLFGAAVITVCSETDFAARSAQFQNTCARVKDALQRKIIDSKGDVLTNPMEAHRSLVEATAEDIRSSIAVLGENVTIKSVESLRLAPHVAEHISIGSYTHGSLDVPDVGRIAGVVAVSRLDPTREVQASTLTDVARHFVASSGAEGNYAHQNFFGTEETVGQWLKHHGLCFSSSLVVDFGKEPITHTASQPRNAVKHPEG</sequence>